<keyword id="KW-0233">DNA recombination</keyword>
<keyword id="KW-0238">DNA-binding</keyword>
<keyword id="KW-1185">Reference proteome</keyword>
<keyword id="KW-0804">Transcription</keyword>
<keyword id="KW-0805">Transcription regulation</keyword>
<keyword id="KW-0810">Translation regulation</keyword>
<evidence type="ECO:0000250" key="1"/>
<evidence type="ECO:0000305" key="2"/>
<organism>
    <name type="scientific">Vibrio cholerae serotype O1 (strain ATCC 39315 / El Tor Inaba N16961)</name>
    <dbReference type="NCBI Taxonomy" id="243277"/>
    <lineage>
        <taxon>Bacteria</taxon>
        <taxon>Pseudomonadati</taxon>
        <taxon>Pseudomonadota</taxon>
        <taxon>Gammaproteobacteria</taxon>
        <taxon>Vibrionales</taxon>
        <taxon>Vibrionaceae</taxon>
        <taxon>Vibrio</taxon>
    </lineage>
</organism>
<comment type="function">
    <text evidence="1">This protein is one of the two subunits of integration host factor, a specific DNA-binding protein that functions in genetic recombination as well as in transcriptional and translational control.</text>
</comment>
<comment type="subunit">
    <text evidence="1">Heterodimer of an alpha and a beta chain.</text>
</comment>
<comment type="similarity">
    <text evidence="2">Belongs to the bacterial histone-like protein family.</text>
</comment>
<name>IHFB_VIBCH</name>
<accession>Q9KQT4</accession>
<gene>
    <name type="primary">ihfB</name>
    <name type="synonym">himD</name>
    <name type="ordered locus">VC_1914</name>
</gene>
<sequence length="92" mass="10546">MTKSELIERLCAEQTHLSAKEIEDAVKNILEHMASTLEAGERIEIRGFGSFSLHYREPRVGRNPKTGDKVELEGKYVPHFKPGKELRERVNL</sequence>
<feature type="chain" id="PRO_0000105073" description="Integration host factor subunit beta">
    <location>
        <begin position="1"/>
        <end position="92"/>
    </location>
</feature>
<reference key="1">
    <citation type="journal article" date="2000" name="Nature">
        <title>DNA sequence of both chromosomes of the cholera pathogen Vibrio cholerae.</title>
        <authorList>
            <person name="Heidelberg J.F."/>
            <person name="Eisen J.A."/>
            <person name="Nelson W.C."/>
            <person name="Clayton R.A."/>
            <person name="Gwinn M.L."/>
            <person name="Dodson R.J."/>
            <person name="Haft D.H."/>
            <person name="Hickey E.K."/>
            <person name="Peterson J.D."/>
            <person name="Umayam L.A."/>
            <person name="Gill S.R."/>
            <person name="Nelson K.E."/>
            <person name="Read T.D."/>
            <person name="Tettelin H."/>
            <person name="Richardson D.L."/>
            <person name="Ermolaeva M.D."/>
            <person name="Vamathevan J.J."/>
            <person name="Bass S."/>
            <person name="Qin H."/>
            <person name="Dragoi I."/>
            <person name="Sellers P."/>
            <person name="McDonald L.A."/>
            <person name="Utterback T.R."/>
            <person name="Fleischmann R.D."/>
            <person name="Nierman W.C."/>
            <person name="White O."/>
            <person name="Salzberg S.L."/>
            <person name="Smith H.O."/>
            <person name="Colwell R.R."/>
            <person name="Mekalanos J.J."/>
            <person name="Venter J.C."/>
            <person name="Fraser C.M."/>
        </authorList>
    </citation>
    <scope>NUCLEOTIDE SEQUENCE [LARGE SCALE GENOMIC DNA]</scope>
    <source>
        <strain>ATCC 39315 / El Tor Inaba N16961</strain>
    </source>
</reference>
<protein>
    <recommendedName>
        <fullName>Integration host factor subunit beta</fullName>
        <shortName>IHF-beta</shortName>
    </recommendedName>
</protein>
<proteinExistence type="inferred from homology"/>
<dbReference type="EMBL" id="AE003852">
    <property type="protein sequence ID" value="AAF95062.1"/>
    <property type="molecule type" value="Genomic_DNA"/>
</dbReference>
<dbReference type="PIR" id="A82141">
    <property type="entry name" value="A82141"/>
</dbReference>
<dbReference type="RefSeq" id="NP_231548.1">
    <property type="nucleotide sequence ID" value="NC_002505.1"/>
</dbReference>
<dbReference type="RefSeq" id="WP_000167341.1">
    <property type="nucleotide sequence ID" value="NZ_LT906614.1"/>
</dbReference>
<dbReference type="SMR" id="Q9KQT4"/>
<dbReference type="STRING" id="243277.VC_1914"/>
<dbReference type="DNASU" id="2613543"/>
<dbReference type="EnsemblBacteria" id="AAF95062">
    <property type="protein sequence ID" value="AAF95062"/>
    <property type="gene ID" value="VC_1914"/>
</dbReference>
<dbReference type="GeneID" id="94013431"/>
<dbReference type="KEGG" id="vch:VC_1914"/>
<dbReference type="PATRIC" id="fig|243277.26.peg.1831"/>
<dbReference type="eggNOG" id="COG0776">
    <property type="taxonomic scope" value="Bacteria"/>
</dbReference>
<dbReference type="HOGENOM" id="CLU_105066_2_0_6"/>
<dbReference type="Proteomes" id="UP000000584">
    <property type="component" value="Chromosome 1"/>
</dbReference>
<dbReference type="GO" id="GO:0005694">
    <property type="term" value="C:chromosome"/>
    <property type="evidence" value="ECO:0007669"/>
    <property type="project" value="InterPro"/>
</dbReference>
<dbReference type="GO" id="GO:0005829">
    <property type="term" value="C:cytosol"/>
    <property type="evidence" value="ECO:0000318"/>
    <property type="project" value="GO_Central"/>
</dbReference>
<dbReference type="GO" id="GO:0003677">
    <property type="term" value="F:DNA binding"/>
    <property type="evidence" value="ECO:0000318"/>
    <property type="project" value="GO_Central"/>
</dbReference>
<dbReference type="GO" id="GO:0030527">
    <property type="term" value="F:structural constituent of chromatin"/>
    <property type="evidence" value="ECO:0007669"/>
    <property type="project" value="InterPro"/>
</dbReference>
<dbReference type="GO" id="GO:0006310">
    <property type="term" value="P:DNA recombination"/>
    <property type="evidence" value="ECO:0007669"/>
    <property type="project" value="UniProtKB-UniRule"/>
</dbReference>
<dbReference type="GO" id="GO:0006355">
    <property type="term" value="P:regulation of DNA-templated transcription"/>
    <property type="evidence" value="ECO:0007669"/>
    <property type="project" value="UniProtKB-UniRule"/>
</dbReference>
<dbReference type="GO" id="GO:0006417">
    <property type="term" value="P:regulation of translation"/>
    <property type="evidence" value="ECO:0007669"/>
    <property type="project" value="UniProtKB-UniRule"/>
</dbReference>
<dbReference type="CDD" id="cd13836">
    <property type="entry name" value="IHF_B"/>
    <property type="match status" value="1"/>
</dbReference>
<dbReference type="FunFam" id="4.10.520.10:FF:000003">
    <property type="entry name" value="Integration host factor subunit beta"/>
    <property type="match status" value="1"/>
</dbReference>
<dbReference type="Gene3D" id="4.10.520.10">
    <property type="entry name" value="IHF-like DNA-binding proteins"/>
    <property type="match status" value="1"/>
</dbReference>
<dbReference type="HAMAP" id="MF_00381">
    <property type="entry name" value="IHF_beta"/>
    <property type="match status" value="1"/>
</dbReference>
<dbReference type="InterPro" id="IPR000119">
    <property type="entry name" value="Hist_DNA-bd"/>
</dbReference>
<dbReference type="InterPro" id="IPR020816">
    <property type="entry name" value="Histone-like_DNA-bd_CS"/>
</dbReference>
<dbReference type="InterPro" id="IPR010992">
    <property type="entry name" value="IHF-like_DNA-bd_dom_sf"/>
</dbReference>
<dbReference type="InterPro" id="IPR005685">
    <property type="entry name" value="IHF_beta"/>
</dbReference>
<dbReference type="NCBIfam" id="TIGR00988">
    <property type="entry name" value="hip"/>
    <property type="match status" value="1"/>
</dbReference>
<dbReference type="NCBIfam" id="NF001222">
    <property type="entry name" value="PRK00199.1"/>
    <property type="match status" value="1"/>
</dbReference>
<dbReference type="PANTHER" id="PTHR33175">
    <property type="entry name" value="DNA-BINDING PROTEIN HU"/>
    <property type="match status" value="1"/>
</dbReference>
<dbReference type="PANTHER" id="PTHR33175:SF5">
    <property type="entry name" value="INTEGRATION HOST FACTOR SUBUNIT BETA"/>
    <property type="match status" value="1"/>
</dbReference>
<dbReference type="Pfam" id="PF00216">
    <property type="entry name" value="Bac_DNA_binding"/>
    <property type="match status" value="1"/>
</dbReference>
<dbReference type="PRINTS" id="PR01727">
    <property type="entry name" value="DNABINDINGHU"/>
</dbReference>
<dbReference type="SMART" id="SM00411">
    <property type="entry name" value="BHL"/>
    <property type="match status" value="1"/>
</dbReference>
<dbReference type="SUPFAM" id="SSF47729">
    <property type="entry name" value="IHF-like DNA-binding proteins"/>
    <property type="match status" value="1"/>
</dbReference>
<dbReference type="PROSITE" id="PS00045">
    <property type="entry name" value="HISTONE_LIKE"/>
    <property type="match status" value="1"/>
</dbReference>